<evidence type="ECO:0000250" key="1">
    <source>
        <dbReference type="UniProtKB" id="E3SCZ8"/>
    </source>
</evidence>
<evidence type="ECO:0000250" key="2">
    <source>
        <dbReference type="UniProtKB" id="O15392"/>
    </source>
</evidence>
<evidence type="ECO:0000255" key="3">
    <source>
        <dbReference type="PROSITE-ProRule" id="PRU00029"/>
    </source>
</evidence>
<evidence type="ECO:0000305" key="4"/>
<keyword id="KW-0007">Acetylation</keyword>
<keyword id="KW-0053">Apoptosis</keyword>
<keyword id="KW-0131">Cell cycle</keyword>
<keyword id="KW-0132">Cell division</keyword>
<keyword id="KW-0137">Centromere</keyword>
<keyword id="KW-0158">Chromosome</keyword>
<keyword id="KW-0159">Chromosome partition</keyword>
<keyword id="KW-0963">Cytoplasm</keyword>
<keyword id="KW-0206">Cytoskeleton</keyword>
<keyword id="KW-0995">Kinetochore</keyword>
<keyword id="KW-0479">Metal-binding</keyword>
<keyword id="KW-0493">Microtubule</keyword>
<keyword id="KW-0498">Mitosis</keyword>
<keyword id="KW-0539">Nucleus</keyword>
<keyword id="KW-0597">Phosphoprotein</keyword>
<keyword id="KW-0646">Protease inhibitor</keyword>
<keyword id="KW-1185">Reference proteome</keyword>
<keyword id="KW-0678">Repressor</keyword>
<keyword id="KW-0789">Thiol protease inhibitor</keyword>
<keyword id="KW-0804">Transcription</keyword>
<keyword id="KW-0805">Transcription regulation</keyword>
<keyword id="KW-0832">Ubl conjugation</keyword>
<keyword id="KW-0862">Zinc</keyword>
<dbReference type="EMBL" id="AY606044">
    <property type="protein sequence ID" value="AAT37504.1"/>
    <property type="molecule type" value="mRNA"/>
</dbReference>
<dbReference type="EMBL" id="BC109566">
    <property type="protein sequence ID" value="AAI09567.1"/>
    <property type="molecule type" value="mRNA"/>
</dbReference>
<dbReference type="RefSeq" id="NP_001001855.2">
    <property type="nucleotide sequence ID" value="NM_001001855.3"/>
</dbReference>
<dbReference type="SMR" id="Q6J1J1"/>
<dbReference type="FunCoup" id="Q6J1J1">
    <property type="interactions" value="1118"/>
</dbReference>
<dbReference type="STRING" id="9913.ENSBTAP00000018046"/>
<dbReference type="MEROPS" id="I32.005"/>
<dbReference type="PaxDb" id="9913-ENSBTAP00000018046"/>
<dbReference type="Ensembl" id="ENSBTAT00000018046.4">
    <property type="protein sequence ID" value="ENSBTAP00000018046.2"/>
    <property type="gene ID" value="ENSBTAG00000013573.4"/>
</dbReference>
<dbReference type="GeneID" id="414925"/>
<dbReference type="KEGG" id="bta:414925"/>
<dbReference type="CTD" id="332"/>
<dbReference type="VEuPathDB" id="HostDB:ENSBTAG00000013573"/>
<dbReference type="VGNC" id="VGNC:26501">
    <property type="gene designation" value="BIRC5"/>
</dbReference>
<dbReference type="eggNOG" id="KOG1101">
    <property type="taxonomic scope" value="Eukaryota"/>
</dbReference>
<dbReference type="GeneTree" id="ENSGT00510000047537"/>
<dbReference type="HOGENOM" id="CLU_016347_0_1_1"/>
<dbReference type="InParanoid" id="Q6J1J1"/>
<dbReference type="OMA" id="IKMYFYE"/>
<dbReference type="OrthoDB" id="2196114at2759"/>
<dbReference type="TreeFam" id="TF342652"/>
<dbReference type="Reactome" id="R-BTA-141444">
    <property type="pathway name" value="Amplification of signal from unattached kinetochores via a MAD2 inhibitory signal"/>
</dbReference>
<dbReference type="Reactome" id="R-BTA-2467813">
    <property type="pathway name" value="Separation of Sister Chromatids"/>
</dbReference>
<dbReference type="Reactome" id="R-BTA-2500257">
    <property type="pathway name" value="Resolution of Sister Chromatid Cohesion"/>
</dbReference>
<dbReference type="Reactome" id="R-BTA-4615885">
    <property type="pathway name" value="SUMOylation of DNA replication proteins"/>
</dbReference>
<dbReference type="Reactome" id="R-BTA-5663220">
    <property type="pathway name" value="RHO GTPases Activate Formins"/>
</dbReference>
<dbReference type="Reactome" id="R-BTA-68877">
    <property type="pathway name" value="Mitotic Prometaphase"/>
</dbReference>
<dbReference type="Reactome" id="R-BTA-8951664">
    <property type="pathway name" value="Neddylation"/>
</dbReference>
<dbReference type="Reactome" id="R-BTA-9648025">
    <property type="pathway name" value="EML4 and NUDC in mitotic spindle formation"/>
</dbReference>
<dbReference type="Proteomes" id="UP000009136">
    <property type="component" value="Chromosome 19"/>
</dbReference>
<dbReference type="Bgee" id="ENSBTAG00000013573">
    <property type="expression patterns" value="Expressed in spermatid and 105 other cell types or tissues"/>
</dbReference>
<dbReference type="GO" id="GO:0005814">
    <property type="term" value="C:centriole"/>
    <property type="evidence" value="ECO:0000250"/>
    <property type="project" value="UniProtKB"/>
</dbReference>
<dbReference type="GO" id="GO:0032133">
    <property type="term" value="C:chromosome passenger complex"/>
    <property type="evidence" value="ECO:0000250"/>
    <property type="project" value="UniProtKB"/>
</dbReference>
<dbReference type="GO" id="GO:0000775">
    <property type="term" value="C:chromosome, centromeric region"/>
    <property type="evidence" value="ECO:0000250"/>
    <property type="project" value="UniProtKB"/>
</dbReference>
<dbReference type="GO" id="GO:0005737">
    <property type="term" value="C:cytoplasm"/>
    <property type="evidence" value="ECO:0000250"/>
    <property type="project" value="UniProtKB"/>
</dbReference>
<dbReference type="GO" id="GO:0005881">
    <property type="term" value="C:cytoplasmic microtubule"/>
    <property type="evidence" value="ECO:0000250"/>
    <property type="project" value="UniProtKB"/>
</dbReference>
<dbReference type="GO" id="GO:0005829">
    <property type="term" value="C:cytosol"/>
    <property type="evidence" value="ECO:0000250"/>
    <property type="project" value="UniProtKB"/>
</dbReference>
<dbReference type="GO" id="GO:0031021">
    <property type="term" value="C:interphase microtubule organizing center"/>
    <property type="evidence" value="ECO:0000250"/>
    <property type="project" value="UniProtKB"/>
</dbReference>
<dbReference type="GO" id="GO:0000776">
    <property type="term" value="C:kinetochore"/>
    <property type="evidence" value="ECO:0000250"/>
    <property type="project" value="UniProtKB"/>
</dbReference>
<dbReference type="GO" id="GO:0030496">
    <property type="term" value="C:midbody"/>
    <property type="evidence" value="ECO:0000250"/>
    <property type="project" value="UniProtKB"/>
</dbReference>
<dbReference type="GO" id="GO:0005634">
    <property type="term" value="C:nucleus"/>
    <property type="evidence" value="ECO:0000250"/>
    <property type="project" value="UniProtKB"/>
</dbReference>
<dbReference type="GO" id="GO:0005876">
    <property type="term" value="C:spindle microtubule"/>
    <property type="evidence" value="ECO:0000250"/>
    <property type="project" value="UniProtKB"/>
</dbReference>
<dbReference type="GO" id="GO:0051233">
    <property type="term" value="C:spindle midzone"/>
    <property type="evidence" value="ECO:0000318"/>
    <property type="project" value="GO_Central"/>
</dbReference>
<dbReference type="GO" id="GO:0004869">
    <property type="term" value="F:cysteine-type endopeptidase inhibitor activity"/>
    <property type="evidence" value="ECO:0007669"/>
    <property type="project" value="UniProtKB-KW"/>
</dbReference>
<dbReference type="GO" id="GO:0043027">
    <property type="term" value="F:cysteine-type endopeptidase inhibitor activity involved in apoptotic process"/>
    <property type="evidence" value="ECO:0000250"/>
    <property type="project" value="UniProtKB"/>
</dbReference>
<dbReference type="GO" id="GO:0008017">
    <property type="term" value="F:microtubule binding"/>
    <property type="evidence" value="ECO:0000250"/>
    <property type="project" value="UniProtKB"/>
</dbReference>
<dbReference type="GO" id="GO:0042803">
    <property type="term" value="F:protein homodimerization activity"/>
    <property type="evidence" value="ECO:0000250"/>
    <property type="project" value="UniProtKB"/>
</dbReference>
<dbReference type="GO" id="GO:0015631">
    <property type="term" value="F:tubulin binding"/>
    <property type="evidence" value="ECO:0000250"/>
    <property type="project" value="UniProtKB"/>
</dbReference>
<dbReference type="GO" id="GO:0008270">
    <property type="term" value="F:zinc ion binding"/>
    <property type="evidence" value="ECO:0000250"/>
    <property type="project" value="UniProtKB"/>
</dbReference>
<dbReference type="GO" id="GO:0006915">
    <property type="term" value="P:apoptotic process"/>
    <property type="evidence" value="ECO:0007669"/>
    <property type="project" value="UniProtKB-KW"/>
</dbReference>
<dbReference type="GO" id="GO:0051301">
    <property type="term" value="P:cell division"/>
    <property type="evidence" value="ECO:0000250"/>
    <property type="project" value="UniProtKB"/>
</dbReference>
<dbReference type="GO" id="GO:0007059">
    <property type="term" value="P:chromosome segregation"/>
    <property type="evidence" value="ECO:0000318"/>
    <property type="project" value="GO_Central"/>
</dbReference>
<dbReference type="GO" id="GO:0051303">
    <property type="term" value="P:establishment of chromosome localization"/>
    <property type="evidence" value="ECO:0000250"/>
    <property type="project" value="UniProtKB"/>
</dbReference>
<dbReference type="GO" id="GO:0000086">
    <property type="term" value="P:G2/M transition of mitotic cell cycle"/>
    <property type="evidence" value="ECO:0000250"/>
    <property type="project" value="UniProtKB"/>
</dbReference>
<dbReference type="GO" id="GO:0007127">
    <property type="term" value="P:meiosis I"/>
    <property type="evidence" value="ECO:0007669"/>
    <property type="project" value="Ensembl"/>
</dbReference>
<dbReference type="GO" id="GO:0000281">
    <property type="term" value="P:mitotic cytokinesis"/>
    <property type="evidence" value="ECO:0000250"/>
    <property type="project" value="UniProtKB"/>
</dbReference>
<dbReference type="GO" id="GO:0007094">
    <property type="term" value="P:mitotic spindle assembly checkpoint signaling"/>
    <property type="evidence" value="ECO:0000250"/>
    <property type="project" value="UniProtKB"/>
</dbReference>
<dbReference type="GO" id="GO:0007052">
    <property type="term" value="P:mitotic spindle organization"/>
    <property type="evidence" value="ECO:0000318"/>
    <property type="project" value="GO_Central"/>
</dbReference>
<dbReference type="GO" id="GO:0043066">
    <property type="term" value="P:negative regulation of apoptotic process"/>
    <property type="evidence" value="ECO:0000250"/>
    <property type="project" value="UniProtKB"/>
</dbReference>
<dbReference type="GO" id="GO:0045892">
    <property type="term" value="P:negative regulation of DNA-templated transcription"/>
    <property type="evidence" value="ECO:0000250"/>
    <property type="project" value="UniProtKB"/>
</dbReference>
<dbReference type="GO" id="GO:0043524">
    <property type="term" value="P:negative regulation of neuron apoptotic process"/>
    <property type="evidence" value="ECO:0007669"/>
    <property type="project" value="Ensembl"/>
</dbReference>
<dbReference type="GO" id="GO:0031536">
    <property type="term" value="P:positive regulation of exit from mitosis"/>
    <property type="evidence" value="ECO:0000250"/>
    <property type="project" value="UniProtKB"/>
</dbReference>
<dbReference type="GO" id="GO:0045931">
    <property type="term" value="P:positive regulation of mitotic cell cycle"/>
    <property type="evidence" value="ECO:0000250"/>
    <property type="project" value="UniProtKB"/>
</dbReference>
<dbReference type="GO" id="GO:0031503">
    <property type="term" value="P:protein-containing complex localization"/>
    <property type="evidence" value="ECO:0000250"/>
    <property type="project" value="UniProtKB"/>
</dbReference>
<dbReference type="GO" id="GO:0061178">
    <property type="term" value="P:regulation of insulin secretion involved in cellular response to glucose stimulus"/>
    <property type="evidence" value="ECO:0007669"/>
    <property type="project" value="Ensembl"/>
</dbReference>
<dbReference type="GO" id="GO:0061469">
    <property type="term" value="P:regulation of type B pancreatic cell proliferation"/>
    <property type="evidence" value="ECO:0007669"/>
    <property type="project" value="Ensembl"/>
</dbReference>
<dbReference type="CDD" id="cd00022">
    <property type="entry name" value="BIR"/>
    <property type="match status" value="1"/>
</dbReference>
<dbReference type="FunFam" id="1.10.1170.10:FF:000009">
    <property type="entry name" value="Baculoviral IAP repeat-containing protein 5"/>
    <property type="match status" value="1"/>
</dbReference>
<dbReference type="Gene3D" id="1.10.1170.10">
    <property type="entry name" value="Inhibitor Of Apoptosis Protein (2mihbC-IAP-1), Chain A"/>
    <property type="match status" value="1"/>
</dbReference>
<dbReference type="InterPro" id="IPR051190">
    <property type="entry name" value="Baculoviral_IAP"/>
</dbReference>
<dbReference type="InterPro" id="IPR001370">
    <property type="entry name" value="BIR_rpt"/>
</dbReference>
<dbReference type="PANTHER" id="PTHR46771:SF3">
    <property type="entry name" value="BACULOVIRAL IAP REPEAT-CONTAINING PROTEIN 5"/>
    <property type="match status" value="1"/>
</dbReference>
<dbReference type="PANTHER" id="PTHR46771">
    <property type="entry name" value="DETERIN"/>
    <property type="match status" value="1"/>
</dbReference>
<dbReference type="Pfam" id="PF00653">
    <property type="entry name" value="BIR"/>
    <property type="match status" value="1"/>
</dbReference>
<dbReference type="SMART" id="SM00238">
    <property type="entry name" value="BIR"/>
    <property type="match status" value="1"/>
</dbReference>
<dbReference type="SUPFAM" id="SSF57924">
    <property type="entry name" value="Inhibitor of apoptosis (IAP) repeat"/>
    <property type="match status" value="1"/>
</dbReference>
<dbReference type="PROSITE" id="PS50143">
    <property type="entry name" value="BIR_REPEAT_2"/>
    <property type="match status" value="1"/>
</dbReference>
<accession>Q6J1J1</accession>
<accession>Q32LI0</accession>
<name>BIRC5_BOVIN</name>
<reference key="1">
    <citation type="submission" date="2004-04" db="EMBL/GenBank/DDBJ databases">
        <title>mRNA expression in sheep and cattle blastocysts.</title>
        <authorList>
            <person name="Gutierrez-Adan A."/>
        </authorList>
    </citation>
    <scope>NUCLEOTIDE SEQUENCE [MRNA]</scope>
</reference>
<reference key="2">
    <citation type="submission" date="2005-11" db="EMBL/GenBank/DDBJ databases">
        <authorList>
            <consortium name="NIH - Mammalian Gene Collection (MGC) project"/>
        </authorList>
    </citation>
    <scope>NUCLEOTIDE SEQUENCE [LARGE SCALE MRNA]</scope>
    <source>
        <strain>Crossbred X Angus</strain>
        <tissue>Liver</tissue>
    </source>
</reference>
<feature type="chain" id="PRO_0000226729" description="Baculoviral IAP repeat-containing protein 5">
    <location>
        <begin position="1"/>
        <end position="142"/>
    </location>
</feature>
<feature type="repeat" description="BIR">
    <location>
        <begin position="18"/>
        <end position="88"/>
    </location>
</feature>
<feature type="binding site" evidence="3">
    <location>
        <position position="57"/>
    </location>
    <ligand>
        <name>Zn(2+)</name>
        <dbReference type="ChEBI" id="CHEBI:29105"/>
    </ligand>
</feature>
<feature type="binding site" evidence="3">
    <location>
        <position position="60"/>
    </location>
    <ligand>
        <name>Zn(2+)</name>
        <dbReference type="ChEBI" id="CHEBI:29105"/>
    </ligand>
</feature>
<feature type="binding site" evidence="3">
    <location>
        <position position="77"/>
    </location>
    <ligand>
        <name>Zn(2+)</name>
        <dbReference type="ChEBI" id="CHEBI:29105"/>
    </ligand>
</feature>
<feature type="binding site" evidence="3">
    <location>
        <position position="84"/>
    </location>
    <ligand>
        <name>Zn(2+)</name>
        <dbReference type="ChEBI" id="CHEBI:29105"/>
    </ligand>
</feature>
<feature type="site" description="Interaction with FBXL7" evidence="2">
    <location>
        <position position="126"/>
    </location>
</feature>
<feature type="modified residue" description="Phosphoserine; by AURKC" evidence="2">
    <location>
        <position position="20"/>
    </location>
</feature>
<feature type="modified residue" description="N6-acetyllysine" evidence="2">
    <location>
        <position position="23"/>
    </location>
</feature>
<feature type="modified residue" description="Phosphothreonine; by CDK1 and CDK15" evidence="2">
    <location>
        <position position="34"/>
    </location>
</feature>
<feature type="modified residue" description="Phosphothreonine" evidence="2">
    <location>
        <position position="48"/>
    </location>
</feature>
<feature type="modified residue" description="N6-acetyllysine" evidence="2">
    <location>
        <position position="90"/>
    </location>
</feature>
<feature type="modified residue" description="N6-acetyllysine" evidence="2">
    <location>
        <position position="110"/>
    </location>
</feature>
<feature type="modified residue" description="N6-acetyllysine" evidence="2">
    <location>
        <position position="112"/>
    </location>
</feature>
<feature type="modified residue" description="N6-acetyllysine" evidence="2">
    <location>
        <position position="115"/>
    </location>
</feature>
<feature type="modified residue" description="Phosphothreonine; by AURKB" evidence="2">
    <location>
        <position position="117"/>
    </location>
</feature>
<feature type="modified residue" description="N6-acetyllysine" evidence="2">
    <location>
        <position position="129"/>
    </location>
</feature>
<feature type="sequence conflict" description="In Ref. 1; AAT37504." evidence="4" ref="1">
    <original>GAQ</original>
    <variation>SAP</variation>
    <location>
        <begin position="2"/>
        <end position="4"/>
    </location>
</feature>
<feature type="sequence conflict" description="In Ref. 1; AAT37504." evidence="4" ref="1">
    <original>V</original>
    <variation>I</variation>
    <location>
        <position position="19"/>
    </location>
</feature>
<feature type="sequence conflict" description="In Ref. 1; AAT37504." evidence="4" ref="1">
    <original>A</original>
    <variation>E</variation>
    <location>
        <position position="40"/>
    </location>
</feature>
<feature type="sequence conflict" description="In Ref. 1; AAT37504." evidence="4" ref="1">
    <original>F</original>
    <variation>L</variation>
    <location>
        <position position="59"/>
    </location>
</feature>
<feature type="sequence conflict" description="In Ref. 1; AAT37504." evidence="4" ref="1">
    <original>T</original>
    <variation>A</variation>
    <location>
        <position position="109"/>
    </location>
</feature>
<feature type="sequence conflict" description="In Ref. 1; AAT37504." evidence="4" ref="1">
    <original>AALE</original>
    <variation>VAMD</variation>
    <location>
        <begin position="139"/>
        <end position="142"/>
    </location>
</feature>
<organism>
    <name type="scientific">Bos taurus</name>
    <name type="common">Bovine</name>
    <dbReference type="NCBI Taxonomy" id="9913"/>
    <lineage>
        <taxon>Eukaryota</taxon>
        <taxon>Metazoa</taxon>
        <taxon>Chordata</taxon>
        <taxon>Craniata</taxon>
        <taxon>Vertebrata</taxon>
        <taxon>Euteleostomi</taxon>
        <taxon>Mammalia</taxon>
        <taxon>Eutheria</taxon>
        <taxon>Laurasiatheria</taxon>
        <taxon>Artiodactyla</taxon>
        <taxon>Ruminantia</taxon>
        <taxon>Pecora</taxon>
        <taxon>Bovidae</taxon>
        <taxon>Bovinae</taxon>
        <taxon>Bos</taxon>
    </lineage>
</organism>
<sequence length="142" mass="16341">MGAQSLPPAWQLYLKDHRVSTFKNWPFLEGCACTPERMAAAGFIHCPTENEPDLAQCFFCFKELEGWEPDDDPIEEHKKHSSGCAFLSVKKQFEELTLSEFLKLDKERTKNKIAKETNNKQKEFEETAKKVRCAIEQLAALE</sequence>
<comment type="function">
    <text evidence="2">Multitasking protein that has dual roles in promoting cell proliferation and preventing apoptosis (By similarity). Component of a chromosome passage protein complex (CPC) which is essential for chromosome alignment and segregation during mitosis and cytokinesis (By similarity). Acts as an important regulator of the localization of this complex; directs CPC movement to different locations from the inner centromere during prometaphase to midbody during cytokinesis and participates in the organization of the center spindle by associating with polymerized microtubules (By similarity). Involved in the recruitment of CPC to centromeres during early mitosis via association with histone H3 phosphorylated at 'Thr-3' (H3pT3) during mitosis (By similarity). The complex with RAN plays a role in mitotic spindle formation by serving as a physical scaffold to help deliver the RAN effector molecule TPX2 to microtubules (By similarity). May counteract a default induction of apoptosis in G2/M phase (By similarity). The acetylated form represses STAT3 transactivation of target gene promoters (By similarity). May play a role in neoplasia. Inhibitor of CASP3 and CASP7 (By similarity). Essential for the maintenance of mitochondrial integrity and function (By similarity).</text>
</comment>
<comment type="subunit">
    <text evidence="2">Monomer or homodimer. Exists as a homodimer in the apo state and as a monomer in the CPC-bound state. The monomer protects cells against apoptosis more efficiently than the dimer. Only the dimeric form is capable of enhancing tubulin stability in cells. When phosphorylated, interacts with LAMTOR5/HBXIP; the resulting complex binds pro-CASP9, as well as active CASP9, but much less efficiently. Component of the chromosomal passenger complex (CPC) composed of at least BIRC5/survivin, CDCA8/borealin, INCENP, AURKB or AURKC; in the complex forms a triple-helix bundle-based subcomplex with INCENP and CDCA8. Interacts with JTB. Interacts (via BIR domain) with histone H3 phosphorylated at 'Thr-3' (H3pT3). Interacts with EVI5. Interacts with GTP-bound RAN in both the S and M phases of the cell cycle. Interacts with USP9X. Interacts with tubulin. Interacts with BIRC2/c-IAP1. The acetylated form at Lys-129 interacts with STAT3. The monomeric form deacetylated at Lys-129 interacts with XPO1/CRM1. The monomeric form interacts with XIAP/BIRC4. Both the dimeric and monomeric form can interact with DIABLO/SMAC. Interacts with BIRC6/bruce. Interacts with FBXL7; this interaction facilitates the polyubiquitination and subsequent proteasomal degradation of BIRC5 by the SCF(FBXL7) E3 ubiquitin-protein ligase complex (By similarity).</text>
</comment>
<comment type="subcellular location">
    <subcellularLocation>
        <location evidence="2">Cytoplasm</location>
    </subcellularLocation>
    <subcellularLocation>
        <location evidence="2">Nucleus</location>
    </subcellularLocation>
    <subcellularLocation>
        <location evidence="2">Chromosome</location>
    </subcellularLocation>
    <subcellularLocation>
        <location evidence="2">Chromosome</location>
        <location evidence="2">Centromere</location>
    </subcellularLocation>
    <subcellularLocation>
        <location evidence="2">Cytoplasm</location>
        <location evidence="2">Cytoskeleton</location>
        <location evidence="2">Spindle</location>
    </subcellularLocation>
    <subcellularLocation>
        <location evidence="2">Chromosome</location>
        <location evidence="2">Centromere</location>
        <location evidence="2">Kinetochore</location>
    </subcellularLocation>
    <subcellularLocation>
        <location evidence="2">Midbody</location>
    </subcellularLocation>
    <text evidence="1 2">Localizes at the centromeres from prophase to metaphase, at the spindle midzone during anaphase and a the midbody during telophase and cytokinesis. Accumulates in the nucleus upon treatment with leptomycin B (LMB), a XPO1/CRM1 nuclear export inhibitor (By similarity). Localizes on chromosome arms and inner centromeres from prophase through metaphase. Localizes to kinetochores in metaphase, distributes to the midzone microtubules in anaphase and at telophase, localizes exclusively to the midbody. Colocalizes with AURKB at mitotic chromosomes. Acetylation at Lys-129 directs its localization to the nucleus by enhancing homodimerization and thereby inhibiting XPO1/CRM1-mediated nuclear export (By similarity).</text>
</comment>
<comment type="domain">
    <text evidence="2">The BIR repeat is necessary and sufficient for LAMTOR5 binding.</text>
</comment>
<comment type="PTM">
    <text evidence="2">Ubiquitinated by the Cul9-RING ubiquitin-protein ligase complex, leading to its degradation. Ubiquitination is required for centrosomal targeting. Deubiquitinated by USP35 or USP38; leading to stabilization.</text>
</comment>
<comment type="PTM">
    <text evidence="2">Acetylation at Lys-129 results in its homodimerization, while deacetylation promotes the formation of monomers which heterodimerize with XPO1/CRM1 which facilitates its nuclear export. The acetylated form represses STAT3 transactivation. The dynamic equilibrium between its acetylation and deacetylation at Lys-129 determines its interaction with XPO1/CRM1, its subsequent subcellular localization, and its ability to inhibit STAT3 transactivation.</text>
</comment>
<comment type="PTM">
    <text evidence="2">In vitro phosphorylation at Thr-117 by AURKB prevents interaction with INCENP and localization to mitotic chromosomes. Phosphorylation at Thr-48 by CK2 is critical for its mitotic and anti-apoptotic activities. Phosphorylation at Thr-34 by CDK15 is critical for its anti-apoptotic activity. Phosphorylation at Ser-20 by AURKC is critical for regulation of proper chromosome alignment and segregation, and possibly cytokinesis.</text>
</comment>
<comment type="similarity">
    <text evidence="4">Belongs to the IAP family.</text>
</comment>
<protein>
    <recommendedName>
        <fullName>Baculoviral IAP repeat-containing protein 5</fullName>
    </recommendedName>
    <alternativeName>
        <fullName>Apoptosis inhibitor survivin</fullName>
    </alternativeName>
</protein>
<proteinExistence type="evidence at transcript level"/>
<gene>
    <name type="primary">BIRC5</name>
</gene>